<name>SYH2_SHOC1</name>
<sequence>MKKWDYQNVRGTQDYLPEDESVRVWLRRELEEVFQQYGCKPMETPMINYTDLLASKYGGGAEIKKEMYTLTDRGKRALALRYDLTIPFAKVMAMNPDIRKPFKRYEIGKVFRDGPIKAGRFREFTQCDVDVAGVDSPLAEAELLEMATEVFRRIGLNMTIQYNNRKLLTGMLDICGVSKDQHSAVILILDKREKIGDKQVVNELKEMGVDGKAISKIAQWLKQMSQSGIVDFATDRPTTPIMAEGIAELQELEEALRYLNIDSQCTFNPFLARGLEIYTGTVYELFLTEGAIQSSVGSGGRYDQAISGLTGEEQPMPTVGISFGIDVIYTALKMEGRINQKPLLDYYVIPLQKQKEALAVASSLRKQGFRVDVEFKNKKLTKALDRANKEKIPFVILIGEEEVASGRYKLKNMETGAEQHVPFSF</sequence>
<protein>
    <recommendedName>
        <fullName evidence="1">Histidine--tRNA ligase 2</fullName>
        <ecNumber evidence="1">6.1.1.21</ecNumber>
    </recommendedName>
    <alternativeName>
        <fullName evidence="1">Histidyl-tRNA synthetase 2</fullName>
        <shortName evidence="1">HisRS 2</shortName>
    </alternativeName>
</protein>
<reference key="1">
    <citation type="submission" date="2003-10" db="EMBL/GenBank/DDBJ databases">
        <title>The complete genome sequence of the alkaliphilic Bacillus clausii KSM-K16.</title>
        <authorList>
            <person name="Takaki Y."/>
            <person name="Kageyama Y."/>
            <person name="Shimamura S."/>
            <person name="Suzuki H."/>
            <person name="Nishi S."/>
            <person name="Hatada Y."/>
            <person name="Kawai S."/>
            <person name="Ito S."/>
            <person name="Horikoshi K."/>
        </authorList>
    </citation>
    <scope>NUCLEOTIDE SEQUENCE [LARGE SCALE GENOMIC DNA]</scope>
    <source>
        <strain>KSM-K16</strain>
    </source>
</reference>
<organism>
    <name type="scientific">Shouchella clausii (strain KSM-K16)</name>
    <name type="common">Alkalihalobacillus clausii</name>
    <dbReference type="NCBI Taxonomy" id="66692"/>
    <lineage>
        <taxon>Bacteria</taxon>
        <taxon>Bacillati</taxon>
        <taxon>Bacillota</taxon>
        <taxon>Bacilli</taxon>
        <taxon>Bacillales</taxon>
        <taxon>Bacillaceae</taxon>
        <taxon>Shouchella</taxon>
    </lineage>
</organism>
<comment type="catalytic activity">
    <reaction evidence="1">
        <text>tRNA(His) + L-histidine + ATP = L-histidyl-tRNA(His) + AMP + diphosphate + H(+)</text>
        <dbReference type="Rhea" id="RHEA:17313"/>
        <dbReference type="Rhea" id="RHEA-COMP:9665"/>
        <dbReference type="Rhea" id="RHEA-COMP:9689"/>
        <dbReference type="ChEBI" id="CHEBI:15378"/>
        <dbReference type="ChEBI" id="CHEBI:30616"/>
        <dbReference type="ChEBI" id="CHEBI:33019"/>
        <dbReference type="ChEBI" id="CHEBI:57595"/>
        <dbReference type="ChEBI" id="CHEBI:78442"/>
        <dbReference type="ChEBI" id="CHEBI:78527"/>
        <dbReference type="ChEBI" id="CHEBI:456215"/>
        <dbReference type="EC" id="6.1.1.21"/>
    </reaction>
</comment>
<comment type="subunit">
    <text evidence="1">Homodimer.</text>
</comment>
<comment type="subcellular location">
    <subcellularLocation>
        <location evidence="1">Cytoplasm</location>
    </subcellularLocation>
</comment>
<comment type="similarity">
    <text evidence="1">Belongs to the class-II aminoacyl-tRNA synthetase family.</text>
</comment>
<feature type="chain" id="PRO_0000136102" description="Histidine--tRNA ligase 2">
    <location>
        <begin position="1"/>
        <end position="425"/>
    </location>
</feature>
<proteinExistence type="inferred from homology"/>
<evidence type="ECO:0000255" key="1">
    <source>
        <dbReference type="HAMAP-Rule" id="MF_00127"/>
    </source>
</evidence>
<keyword id="KW-0030">Aminoacyl-tRNA synthetase</keyword>
<keyword id="KW-0067">ATP-binding</keyword>
<keyword id="KW-0963">Cytoplasm</keyword>
<keyword id="KW-0436">Ligase</keyword>
<keyword id="KW-0547">Nucleotide-binding</keyword>
<keyword id="KW-0648">Protein biosynthesis</keyword>
<keyword id="KW-1185">Reference proteome</keyword>
<dbReference type="EC" id="6.1.1.21" evidence="1"/>
<dbReference type="EMBL" id="AP006627">
    <property type="protein sequence ID" value="BAD65843.1"/>
    <property type="molecule type" value="Genomic_DNA"/>
</dbReference>
<dbReference type="RefSeq" id="WP_011248149.1">
    <property type="nucleotide sequence ID" value="NC_006582.1"/>
</dbReference>
<dbReference type="SMR" id="Q5WCR7"/>
<dbReference type="STRING" id="66692.ABC3310"/>
<dbReference type="KEGG" id="bcl:ABC3310"/>
<dbReference type="eggNOG" id="COG0124">
    <property type="taxonomic scope" value="Bacteria"/>
</dbReference>
<dbReference type="HOGENOM" id="CLU_025113_3_0_9"/>
<dbReference type="OrthoDB" id="9800814at2"/>
<dbReference type="Proteomes" id="UP000001168">
    <property type="component" value="Chromosome"/>
</dbReference>
<dbReference type="GO" id="GO:0005737">
    <property type="term" value="C:cytoplasm"/>
    <property type="evidence" value="ECO:0007669"/>
    <property type="project" value="UniProtKB-SubCell"/>
</dbReference>
<dbReference type="GO" id="GO:0005524">
    <property type="term" value="F:ATP binding"/>
    <property type="evidence" value="ECO:0007669"/>
    <property type="project" value="UniProtKB-UniRule"/>
</dbReference>
<dbReference type="GO" id="GO:0140096">
    <property type="term" value="F:catalytic activity, acting on a protein"/>
    <property type="evidence" value="ECO:0007669"/>
    <property type="project" value="UniProtKB-ARBA"/>
</dbReference>
<dbReference type="GO" id="GO:0004821">
    <property type="term" value="F:histidine-tRNA ligase activity"/>
    <property type="evidence" value="ECO:0007669"/>
    <property type="project" value="UniProtKB-UniRule"/>
</dbReference>
<dbReference type="GO" id="GO:0016740">
    <property type="term" value="F:transferase activity"/>
    <property type="evidence" value="ECO:0007669"/>
    <property type="project" value="UniProtKB-ARBA"/>
</dbReference>
<dbReference type="GO" id="GO:0006427">
    <property type="term" value="P:histidyl-tRNA aminoacylation"/>
    <property type="evidence" value="ECO:0007669"/>
    <property type="project" value="UniProtKB-UniRule"/>
</dbReference>
<dbReference type="CDD" id="cd00773">
    <property type="entry name" value="HisRS-like_core"/>
    <property type="match status" value="1"/>
</dbReference>
<dbReference type="CDD" id="cd00859">
    <property type="entry name" value="HisRS_anticodon"/>
    <property type="match status" value="1"/>
</dbReference>
<dbReference type="Gene3D" id="3.40.50.800">
    <property type="entry name" value="Anticodon-binding domain"/>
    <property type="match status" value="1"/>
</dbReference>
<dbReference type="Gene3D" id="3.30.930.10">
    <property type="entry name" value="Bira Bifunctional Protein, Domain 2"/>
    <property type="match status" value="1"/>
</dbReference>
<dbReference type="HAMAP" id="MF_00127">
    <property type="entry name" value="His_tRNA_synth"/>
    <property type="match status" value="1"/>
</dbReference>
<dbReference type="InterPro" id="IPR006195">
    <property type="entry name" value="aa-tRNA-synth_II"/>
</dbReference>
<dbReference type="InterPro" id="IPR045864">
    <property type="entry name" value="aa-tRNA-synth_II/BPL/LPL"/>
</dbReference>
<dbReference type="InterPro" id="IPR004154">
    <property type="entry name" value="Anticodon-bd"/>
</dbReference>
<dbReference type="InterPro" id="IPR036621">
    <property type="entry name" value="Anticodon-bd_dom_sf"/>
</dbReference>
<dbReference type="InterPro" id="IPR015807">
    <property type="entry name" value="His-tRNA-ligase"/>
</dbReference>
<dbReference type="InterPro" id="IPR041715">
    <property type="entry name" value="HisRS-like_core"/>
</dbReference>
<dbReference type="InterPro" id="IPR004516">
    <property type="entry name" value="HisRS/HisZ"/>
</dbReference>
<dbReference type="InterPro" id="IPR033656">
    <property type="entry name" value="HisRS_anticodon"/>
</dbReference>
<dbReference type="NCBIfam" id="TIGR00442">
    <property type="entry name" value="hisS"/>
    <property type="match status" value="1"/>
</dbReference>
<dbReference type="NCBIfam" id="NF009085">
    <property type="entry name" value="PRK12420.1"/>
    <property type="match status" value="1"/>
</dbReference>
<dbReference type="PANTHER" id="PTHR11476:SF7">
    <property type="entry name" value="HISTIDINE--TRNA LIGASE"/>
    <property type="match status" value="1"/>
</dbReference>
<dbReference type="PANTHER" id="PTHR11476">
    <property type="entry name" value="HISTIDYL-TRNA SYNTHETASE"/>
    <property type="match status" value="1"/>
</dbReference>
<dbReference type="Pfam" id="PF03129">
    <property type="entry name" value="HGTP_anticodon"/>
    <property type="match status" value="1"/>
</dbReference>
<dbReference type="Pfam" id="PF13393">
    <property type="entry name" value="tRNA-synt_His"/>
    <property type="match status" value="1"/>
</dbReference>
<dbReference type="PIRSF" id="PIRSF001549">
    <property type="entry name" value="His-tRNA_synth"/>
    <property type="match status" value="1"/>
</dbReference>
<dbReference type="SUPFAM" id="SSF52954">
    <property type="entry name" value="Class II aaRS ABD-related"/>
    <property type="match status" value="1"/>
</dbReference>
<dbReference type="SUPFAM" id="SSF55681">
    <property type="entry name" value="Class II aaRS and biotin synthetases"/>
    <property type="match status" value="1"/>
</dbReference>
<dbReference type="PROSITE" id="PS50862">
    <property type="entry name" value="AA_TRNA_LIGASE_II"/>
    <property type="match status" value="1"/>
</dbReference>
<accession>Q5WCR7</accession>
<gene>
    <name evidence="1" type="primary">hisS2</name>
    <name type="ordered locus">ABC3310</name>
</gene>